<organism>
    <name type="scientific">Conus pennaceus</name>
    <name type="common">Feathered cone</name>
    <name type="synonym">Conus episcopus</name>
    <dbReference type="NCBI Taxonomy" id="37335"/>
    <lineage>
        <taxon>Eukaryota</taxon>
        <taxon>Metazoa</taxon>
        <taxon>Spiralia</taxon>
        <taxon>Lophotrochozoa</taxon>
        <taxon>Mollusca</taxon>
        <taxon>Gastropoda</taxon>
        <taxon>Caenogastropoda</taxon>
        <taxon>Neogastropoda</taxon>
        <taxon>Conoidea</taxon>
        <taxon>Conidae</taxon>
        <taxon>Conus</taxon>
        <taxon>Darioconus</taxon>
    </lineage>
</organism>
<keyword id="KW-0165">Cleavage on pair of basic residues</keyword>
<keyword id="KW-1015">Disulfide bond</keyword>
<keyword id="KW-0964">Secreted</keyword>
<keyword id="KW-0732">Signal</keyword>
<keyword id="KW-0800">Toxin</keyword>
<feature type="signal peptide" evidence="2">
    <location>
        <begin position="1"/>
        <end position="22"/>
    </location>
</feature>
<feature type="propeptide" id="PRO_0000274084" evidence="1">
    <location>
        <begin position="23"/>
        <end position="48"/>
    </location>
</feature>
<feature type="peptide" id="PRO_0000274085" description="Conotoxin Pn-B0151">
    <location>
        <begin position="51"/>
        <end position="62"/>
    </location>
</feature>
<sequence length="62" mass="6909">MRCLPVFVILLLLIASTPSVDALQKTKDDMPLASFHDNVKRILQTLSNKRSCCPTILSCCFV</sequence>
<protein>
    <recommendedName>
        <fullName evidence="5">Conotoxin Pn-B0151</fullName>
    </recommendedName>
</protein>
<evidence type="ECO:0000250" key="1"/>
<evidence type="ECO:0000255" key="2"/>
<evidence type="ECO:0000305" key="3"/>
<evidence type="ECO:0000305" key="4">
    <source>
    </source>
</evidence>
<evidence type="ECO:0000312" key="5">
    <source>
        <dbReference type="EMBL" id="AAG60397.1"/>
    </source>
</evidence>
<accession>Q9BPG0</accession>
<dbReference type="EMBL" id="AF214969">
    <property type="protein sequence ID" value="AAG60397.1"/>
    <property type="molecule type" value="mRNA"/>
</dbReference>
<dbReference type="SMR" id="Q9BPG0"/>
<dbReference type="ConoServer" id="656">
    <property type="toxin name" value="Pn-B0151 precursor"/>
</dbReference>
<dbReference type="GO" id="GO:0005576">
    <property type="term" value="C:extracellular region"/>
    <property type="evidence" value="ECO:0007669"/>
    <property type="project" value="UniProtKB-SubCell"/>
</dbReference>
<dbReference type="GO" id="GO:0090729">
    <property type="term" value="F:toxin activity"/>
    <property type="evidence" value="ECO:0007669"/>
    <property type="project" value="UniProtKB-KW"/>
</dbReference>
<dbReference type="InterPro" id="IPR031565">
    <property type="entry name" value="T-conotoxin"/>
</dbReference>
<dbReference type="Pfam" id="PF16981">
    <property type="entry name" value="Chi-conotoxin"/>
    <property type="match status" value="1"/>
</dbReference>
<comment type="subcellular location">
    <subcellularLocation>
        <location evidence="4">Secreted</location>
    </subcellularLocation>
</comment>
<comment type="tissue specificity">
    <text evidence="4">Expressed by the venom duct.</text>
</comment>
<comment type="domain">
    <text evidence="3">The cysteine framework is V (CC-CC).</text>
</comment>
<comment type="PTM">
    <text evidence="3">Contains 2 disulfide bonds that can be either 'C1-C3, C2-C4' or 'C1-C4, C2-C3', since these disulfide connectivities have been observed for conotoxins with cysteine framework V (for examples, see AC P0DQQ7 and AC P81755).</text>
</comment>
<comment type="similarity">
    <text evidence="3">Belongs to the conotoxin T superfamily.</text>
</comment>
<name>CT151_CONPE</name>
<reference key="1">
    <citation type="journal article" date="2001" name="Mol. Biol. Evol.">
        <title>Mechanisms for evolving hypervariability: the case of conopeptides.</title>
        <authorList>
            <person name="Conticello S.G."/>
            <person name="Gilad Y."/>
            <person name="Avidan N."/>
            <person name="Ben-Asher E."/>
            <person name="Levy Z."/>
            <person name="Fainzilber M."/>
        </authorList>
    </citation>
    <scope>NUCLEOTIDE SEQUENCE [MRNA]</scope>
    <source>
        <tissue>Venom duct</tissue>
    </source>
</reference>
<proteinExistence type="inferred from homology"/>